<proteinExistence type="inferred from homology"/>
<dbReference type="EC" id="3.1.3.82"/>
<dbReference type="EMBL" id="AE001439">
    <property type="protein sequence ID" value="AAD06370.1"/>
    <property type="molecule type" value="Genomic_DNA"/>
</dbReference>
<dbReference type="PIR" id="E71887">
    <property type="entry name" value="E71887"/>
</dbReference>
<dbReference type="RefSeq" id="WP_000633492.1">
    <property type="nucleotide sequence ID" value="NC_000921.1"/>
</dbReference>
<dbReference type="SMR" id="Q9ZKY8"/>
<dbReference type="KEGG" id="hpj:jhp_0794"/>
<dbReference type="PATRIC" id="fig|85963.30.peg.178"/>
<dbReference type="eggNOG" id="COG0241">
    <property type="taxonomic scope" value="Bacteria"/>
</dbReference>
<dbReference type="BRENDA" id="3.1.3.82">
    <property type="organism ID" value="11068"/>
</dbReference>
<dbReference type="UniPathway" id="UPA00356">
    <property type="reaction ID" value="UER00438"/>
</dbReference>
<dbReference type="UniPathway" id="UPA00958"/>
<dbReference type="Proteomes" id="UP000000804">
    <property type="component" value="Chromosome"/>
</dbReference>
<dbReference type="GO" id="GO:0005737">
    <property type="term" value="C:cytoplasm"/>
    <property type="evidence" value="ECO:0007669"/>
    <property type="project" value="UniProtKB-SubCell"/>
</dbReference>
<dbReference type="GO" id="GO:0034200">
    <property type="term" value="F:D-glycero-beta-D-manno-heptose 1,7-bisphosphate 7-phosphatase activity"/>
    <property type="evidence" value="ECO:0000250"/>
    <property type="project" value="UniProtKB"/>
</dbReference>
<dbReference type="GO" id="GO:0000287">
    <property type="term" value="F:magnesium ion binding"/>
    <property type="evidence" value="ECO:0000250"/>
    <property type="project" value="UniProtKB"/>
</dbReference>
<dbReference type="GO" id="GO:0008270">
    <property type="term" value="F:zinc ion binding"/>
    <property type="evidence" value="ECO:0000250"/>
    <property type="project" value="UniProtKB"/>
</dbReference>
<dbReference type="GO" id="GO:0097171">
    <property type="term" value="P:ADP-L-glycero-beta-D-manno-heptose biosynthetic process"/>
    <property type="evidence" value="ECO:0007669"/>
    <property type="project" value="UniProtKB-UniPathway"/>
</dbReference>
<dbReference type="GO" id="GO:0009244">
    <property type="term" value="P:lipopolysaccharide core region biosynthetic process"/>
    <property type="evidence" value="ECO:0007669"/>
    <property type="project" value="UniProtKB-UniPathway"/>
</dbReference>
<dbReference type="CDD" id="cd07503">
    <property type="entry name" value="HAD_HisB-N"/>
    <property type="match status" value="1"/>
</dbReference>
<dbReference type="Gene3D" id="3.40.50.1000">
    <property type="entry name" value="HAD superfamily/HAD-like"/>
    <property type="match status" value="1"/>
</dbReference>
<dbReference type="InterPro" id="IPR036412">
    <property type="entry name" value="HAD-like_sf"/>
</dbReference>
<dbReference type="InterPro" id="IPR006549">
    <property type="entry name" value="HAD-SF_hydro_IIIA"/>
</dbReference>
<dbReference type="InterPro" id="IPR023214">
    <property type="entry name" value="HAD_sf"/>
</dbReference>
<dbReference type="InterPro" id="IPR004446">
    <property type="entry name" value="Heptose_bisP_phosphatase"/>
</dbReference>
<dbReference type="InterPro" id="IPR006543">
    <property type="entry name" value="Histidinol-phos"/>
</dbReference>
<dbReference type="NCBIfam" id="TIGR00213">
    <property type="entry name" value="GmhB_yaeD"/>
    <property type="match status" value="1"/>
</dbReference>
<dbReference type="NCBIfam" id="TIGR01662">
    <property type="entry name" value="HAD-SF-IIIA"/>
    <property type="match status" value="1"/>
</dbReference>
<dbReference type="NCBIfam" id="TIGR01656">
    <property type="entry name" value="Histidinol-ppas"/>
    <property type="match status" value="1"/>
</dbReference>
<dbReference type="PANTHER" id="PTHR42891">
    <property type="entry name" value="D-GLYCERO-BETA-D-MANNO-HEPTOSE-1,7-BISPHOSPHATE 7-PHOSPHATASE"/>
    <property type="match status" value="1"/>
</dbReference>
<dbReference type="PANTHER" id="PTHR42891:SF1">
    <property type="entry name" value="D-GLYCERO-BETA-D-MANNO-HEPTOSE-1,7-BISPHOSPHATE 7-PHOSPHATASE"/>
    <property type="match status" value="1"/>
</dbReference>
<dbReference type="Pfam" id="PF13242">
    <property type="entry name" value="Hydrolase_like"/>
    <property type="match status" value="1"/>
</dbReference>
<dbReference type="PIRSF" id="PIRSF004682">
    <property type="entry name" value="GmhB"/>
    <property type="match status" value="1"/>
</dbReference>
<dbReference type="SUPFAM" id="SSF56784">
    <property type="entry name" value="HAD-like"/>
    <property type="match status" value="1"/>
</dbReference>
<comment type="function">
    <text evidence="1">Converts the D-glycero-beta-D-manno-heptose 1,7-bisphosphate intermediate into D-glycero-beta-D-manno-heptose 1-phosphate by removing the phosphate group at the C-7 position.</text>
</comment>
<comment type="catalytic activity">
    <reaction>
        <text>D-glycero-beta-D-manno-heptose 1,7-bisphosphate + H2O = D-glycero-beta-D-manno-heptose 1-phosphate + phosphate</text>
        <dbReference type="Rhea" id="RHEA:28518"/>
        <dbReference type="ChEBI" id="CHEBI:15377"/>
        <dbReference type="ChEBI" id="CHEBI:43474"/>
        <dbReference type="ChEBI" id="CHEBI:60208"/>
        <dbReference type="ChEBI" id="CHEBI:61593"/>
        <dbReference type="EC" id="3.1.3.82"/>
    </reaction>
</comment>
<comment type="cofactor">
    <cofactor evidence="1">
        <name>Mg(2+)</name>
        <dbReference type="ChEBI" id="CHEBI:18420"/>
    </cofactor>
</comment>
<comment type="cofactor">
    <cofactor evidence="1">
        <name>Zn(2+)</name>
        <dbReference type="ChEBI" id="CHEBI:29105"/>
    </cofactor>
</comment>
<comment type="pathway">
    <text>Nucleotide-sugar biosynthesis; ADP-L-glycero-beta-D-manno-heptose biosynthesis; ADP-L-glycero-beta-D-manno-heptose from D-glycero-beta-D-manno-heptose 7-phosphate: step 2/4.</text>
</comment>
<comment type="pathway">
    <text>Bacterial outer membrane biogenesis; LPS core biosynthesis.</text>
</comment>
<comment type="subunit">
    <text evidence="1">Monomer.</text>
</comment>
<comment type="subcellular location">
    <subcellularLocation>
        <location evidence="1">Cytoplasm</location>
    </subcellularLocation>
</comment>
<comment type="similarity">
    <text evidence="3">Belongs to the GmhB family.</text>
</comment>
<gene>
    <name type="primary">gmhB</name>
    <name type="ordered locus">jhp_0794</name>
</gene>
<keyword id="KW-0119">Carbohydrate metabolism</keyword>
<keyword id="KW-0963">Cytoplasm</keyword>
<keyword id="KW-0378">Hydrolase</keyword>
<keyword id="KW-0448">Lipopolysaccharide biosynthesis</keyword>
<keyword id="KW-0460">Magnesium</keyword>
<keyword id="KW-0479">Metal-binding</keyword>
<keyword id="KW-0862">Zinc</keyword>
<name>GMHBB_HELPJ</name>
<sequence length="174" mass="20187">MITTNKALFLDRDGIINIDRGYVSQKEDFEFQKGIFELLKHTKTLGYKLLLITNQSGINRGYYTLKDFEQLTEYLQESLLKELGFNLDGIYFCRHAPEENCACRKPKPSLILQAAKEHQICLERSFMIGDKESDMLAGLNAKVKNNLLLTQNPLKTPHSWIQCKNLKEMIDWIK</sequence>
<evidence type="ECO:0000250" key="1"/>
<evidence type="ECO:0000250" key="2">
    <source>
        <dbReference type="UniProtKB" id="Q7WG29"/>
    </source>
</evidence>
<evidence type="ECO:0000305" key="3"/>
<protein>
    <recommendedName>
        <fullName>D-glycero-beta-D-manno-heptose-1,7-bisphosphate 7-phosphatase</fullName>
        <ecNumber>3.1.3.82</ecNumber>
    </recommendedName>
    <alternativeName>
        <fullName>D,D-heptose 1,7-bisphosphate phosphatase</fullName>
        <shortName>HBP phosphatase</shortName>
    </alternativeName>
</protein>
<feature type="chain" id="PRO_0000209394" description="D-glycero-beta-D-manno-heptose-1,7-bisphosphate 7-phosphatase">
    <location>
        <begin position="1"/>
        <end position="174"/>
    </location>
</feature>
<feature type="active site" description="Nucleophile" evidence="1">
    <location>
        <position position="11"/>
    </location>
</feature>
<feature type="active site" description="Proton donor" evidence="1">
    <location>
        <position position="13"/>
    </location>
</feature>
<feature type="binding site" evidence="1">
    <location>
        <begin position="11"/>
        <end position="13"/>
    </location>
    <ligand>
        <name>substrate</name>
    </ligand>
</feature>
<feature type="binding site" evidence="1">
    <location>
        <position position="11"/>
    </location>
    <ligand>
        <name>Mg(2+)</name>
        <dbReference type="ChEBI" id="CHEBI:18420"/>
    </ligand>
</feature>
<feature type="binding site" evidence="1">
    <location>
        <position position="13"/>
    </location>
    <ligand>
        <name>Mg(2+)</name>
        <dbReference type="ChEBI" id="CHEBI:18420"/>
    </ligand>
</feature>
<feature type="binding site" evidence="1">
    <location>
        <begin position="19"/>
        <end position="22"/>
    </location>
    <ligand>
        <name>substrate</name>
    </ligand>
</feature>
<feature type="binding site" evidence="1">
    <location>
        <begin position="53"/>
        <end position="56"/>
    </location>
    <ligand>
        <name>substrate</name>
    </ligand>
</feature>
<feature type="binding site" evidence="2">
    <location>
        <position position="93"/>
    </location>
    <ligand>
        <name>Zn(2+)</name>
        <dbReference type="ChEBI" id="CHEBI:29105"/>
    </ligand>
</feature>
<feature type="binding site" evidence="2">
    <location>
        <position position="95"/>
    </location>
    <ligand>
        <name>Zn(2+)</name>
        <dbReference type="ChEBI" id="CHEBI:29105"/>
    </ligand>
</feature>
<feature type="binding site" evidence="2">
    <location>
        <position position="101"/>
    </location>
    <ligand>
        <name>Zn(2+)</name>
        <dbReference type="ChEBI" id="CHEBI:29105"/>
    </ligand>
</feature>
<feature type="binding site" evidence="2">
    <location>
        <position position="103"/>
    </location>
    <ligand>
        <name>Zn(2+)</name>
        <dbReference type="ChEBI" id="CHEBI:29105"/>
    </ligand>
</feature>
<feature type="binding site" evidence="1">
    <location>
        <begin position="104"/>
        <end position="105"/>
    </location>
    <ligand>
        <name>substrate</name>
    </ligand>
</feature>
<feature type="binding site" evidence="1">
    <location>
        <position position="130"/>
    </location>
    <ligand>
        <name>Mg(2+)</name>
        <dbReference type="ChEBI" id="CHEBI:18420"/>
    </ligand>
</feature>
<feature type="binding site" evidence="1">
    <location>
        <position position="131"/>
    </location>
    <ligand>
        <name>Mg(2+)</name>
        <dbReference type="ChEBI" id="CHEBI:18420"/>
    </ligand>
</feature>
<feature type="binding site" evidence="1">
    <location>
        <position position="131"/>
    </location>
    <ligand>
        <name>substrate</name>
    </ligand>
</feature>
<feature type="site" description="Stabilizes the phosphoryl group" evidence="1">
    <location>
        <position position="53"/>
    </location>
</feature>
<feature type="site" description="Contributes to substrate recognition" evidence="1">
    <location>
        <position position="104"/>
    </location>
</feature>
<feature type="site" description="Stabilizes the phosphoryl group" evidence="1">
    <location>
        <position position="105"/>
    </location>
</feature>
<accession>Q9ZKY8</accession>
<organism>
    <name type="scientific">Helicobacter pylori (strain J99 / ATCC 700824)</name>
    <name type="common">Campylobacter pylori J99</name>
    <dbReference type="NCBI Taxonomy" id="85963"/>
    <lineage>
        <taxon>Bacteria</taxon>
        <taxon>Pseudomonadati</taxon>
        <taxon>Campylobacterota</taxon>
        <taxon>Epsilonproteobacteria</taxon>
        <taxon>Campylobacterales</taxon>
        <taxon>Helicobacteraceae</taxon>
        <taxon>Helicobacter</taxon>
    </lineage>
</organism>
<reference key="1">
    <citation type="journal article" date="1999" name="Nature">
        <title>Genomic sequence comparison of two unrelated isolates of the human gastric pathogen Helicobacter pylori.</title>
        <authorList>
            <person name="Alm R.A."/>
            <person name="Ling L.-S.L."/>
            <person name="Moir D.T."/>
            <person name="King B.L."/>
            <person name="Brown E.D."/>
            <person name="Doig P.C."/>
            <person name="Smith D.R."/>
            <person name="Noonan B."/>
            <person name="Guild B.C."/>
            <person name="deJonge B.L."/>
            <person name="Carmel G."/>
            <person name="Tummino P.J."/>
            <person name="Caruso A."/>
            <person name="Uria-Nickelsen M."/>
            <person name="Mills D.M."/>
            <person name="Ives C."/>
            <person name="Gibson R."/>
            <person name="Merberg D."/>
            <person name="Mills S.D."/>
            <person name="Jiang Q."/>
            <person name="Taylor D.E."/>
            <person name="Vovis G.F."/>
            <person name="Trust T.J."/>
        </authorList>
    </citation>
    <scope>NUCLEOTIDE SEQUENCE [LARGE SCALE GENOMIC DNA]</scope>
    <source>
        <strain>J99 / ATCC 700824</strain>
    </source>
</reference>
<reference key="2">
    <citation type="journal article" date="2002" name="Microbiology">
        <title>Novel pathways for biosynthesis of nucleotide-activated glycero-manno-heptose precursors of bacterial glycoproteins and cell surface polysaccharides.</title>
        <authorList>
            <person name="Valvano M.A."/>
            <person name="Messner P."/>
            <person name="Kosma P."/>
        </authorList>
    </citation>
    <scope>BIOSYNTHESIS OF NUCLEOTIDE-ACTIVATED GLYCERO-MANNO-HEPTOSE</scope>
</reference>